<name>Y2117_YERE8</name>
<evidence type="ECO:0000255" key="1">
    <source>
        <dbReference type="HAMAP-Rule" id="MF_01085"/>
    </source>
</evidence>
<dbReference type="EMBL" id="AM286415">
    <property type="protein sequence ID" value="CAL12187.1"/>
    <property type="molecule type" value="Genomic_DNA"/>
</dbReference>
<dbReference type="RefSeq" id="WP_005169550.1">
    <property type="nucleotide sequence ID" value="NC_008800.1"/>
</dbReference>
<dbReference type="RefSeq" id="YP_001006357.1">
    <property type="nucleotide sequence ID" value="NC_008800.1"/>
</dbReference>
<dbReference type="SMR" id="A1JNH2"/>
<dbReference type="KEGG" id="yen:YE2117"/>
<dbReference type="PATRIC" id="fig|393305.7.peg.2279"/>
<dbReference type="eggNOG" id="COG3768">
    <property type="taxonomic scope" value="Bacteria"/>
</dbReference>
<dbReference type="HOGENOM" id="CLU_057693_2_0_6"/>
<dbReference type="OrthoDB" id="958025at2"/>
<dbReference type="Proteomes" id="UP000000642">
    <property type="component" value="Chromosome"/>
</dbReference>
<dbReference type="GO" id="GO:0005886">
    <property type="term" value="C:plasma membrane"/>
    <property type="evidence" value="ECO:0007669"/>
    <property type="project" value="UniProtKB-SubCell"/>
</dbReference>
<dbReference type="HAMAP" id="MF_01085">
    <property type="entry name" value="UPF0283"/>
    <property type="match status" value="1"/>
</dbReference>
<dbReference type="InterPro" id="IPR021147">
    <property type="entry name" value="DUF697"/>
</dbReference>
<dbReference type="InterPro" id="IPR006507">
    <property type="entry name" value="UPF0283"/>
</dbReference>
<dbReference type="NCBIfam" id="TIGR01620">
    <property type="entry name" value="hyp_HI0043"/>
    <property type="match status" value="1"/>
</dbReference>
<dbReference type="PANTHER" id="PTHR39342">
    <property type="entry name" value="UPF0283 MEMBRANE PROTEIN YCJF"/>
    <property type="match status" value="1"/>
</dbReference>
<dbReference type="PANTHER" id="PTHR39342:SF1">
    <property type="entry name" value="UPF0283 MEMBRANE PROTEIN YCJF"/>
    <property type="match status" value="1"/>
</dbReference>
<dbReference type="Pfam" id="PF05128">
    <property type="entry name" value="DUF697"/>
    <property type="match status" value="1"/>
</dbReference>
<keyword id="KW-0997">Cell inner membrane</keyword>
<keyword id="KW-1003">Cell membrane</keyword>
<keyword id="KW-0472">Membrane</keyword>
<keyword id="KW-0812">Transmembrane</keyword>
<keyword id="KW-1133">Transmembrane helix</keyword>
<proteinExistence type="inferred from homology"/>
<reference key="1">
    <citation type="journal article" date="2006" name="PLoS Genet.">
        <title>The complete genome sequence and comparative genome analysis of the high pathogenicity Yersinia enterocolitica strain 8081.</title>
        <authorList>
            <person name="Thomson N.R."/>
            <person name="Howard S."/>
            <person name="Wren B.W."/>
            <person name="Holden M.T.G."/>
            <person name="Crossman L."/>
            <person name="Challis G.L."/>
            <person name="Churcher C."/>
            <person name="Mungall K."/>
            <person name="Brooks K."/>
            <person name="Chillingworth T."/>
            <person name="Feltwell T."/>
            <person name="Abdellah Z."/>
            <person name="Hauser H."/>
            <person name="Jagels K."/>
            <person name="Maddison M."/>
            <person name="Moule S."/>
            <person name="Sanders M."/>
            <person name="Whitehead S."/>
            <person name="Quail M.A."/>
            <person name="Dougan G."/>
            <person name="Parkhill J."/>
            <person name="Prentice M.B."/>
        </authorList>
    </citation>
    <scope>NUCLEOTIDE SEQUENCE [LARGE SCALE GENOMIC DNA]</scope>
    <source>
        <strain>NCTC 13174 / 8081</strain>
    </source>
</reference>
<protein>
    <recommendedName>
        <fullName evidence="1">UPF0283 membrane protein YE2117</fullName>
    </recommendedName>
</protein>
<feature type="chain" id="PRO_1000064856" description="UPF0283 membrane protein YE2117">
    <location>
        <begin position="1"/>
        <end position="354"/>
    </location>
</feature>
<feature type="transmembrane region" description="Helical" evidence="1">
    <location>
        <begin position="71"/>
        <end position="91"/>
    </location>
</feature>
<feature type="transmembrane region" description="Helical" evidence="1">
    <location>
        <begin position="101"/>
        <end position="121"/>
    </location>
</feature>
<feature type="transmembrane region" description="Helical" evidence="1">
    <location>
        <begin position="214"/>
        <end position="234"/>
    </location>
</feature>
<organism>
    <name type="scientific">Yersinia enterocolitica serotype O:8 / biotype 1B (strain NCTC 13174 / 8081)</name>
    <dbReference type="NCBI Taxonomy" id="393305"/>
    <lineage>
        <taxon>Bacteria</taxon>
        <taxon>Pseudomonadati</taxon>
        <taxon>Pseudomonadota</taxon>
        <taxon>Gammaproteobacteria</taxon>
        <taxon>Enterobacterales</taxon>
        <taxon>Yersiniaceae</taxon>
        <taxon>Yersinia</taxon>
    </lineage>
</organism>
<accession>A1JNH2</accession>
<gene>
    <name type="ordered locus">YE2117</name>
</gene>
<sequence length="354" mass="39416">MSEPLKPRIDFEQPLQPIDEPVLKAAQAFDQHAAENFYPADPELDAENEEGRVEGLVNAALKPKRSLWRKMVTVGIALFGVSVIAQSVQWVNQAWQQQDWIALGATTAGGLIVLAGVGSVVTEWRRLYRLRQRAEERDIARELLVSHGIGQGRAFCEKLARQAGLDQGHPALQRWQASLHETHNDREVVELYAKLVQPSLDNLARAEISRYAAESALMIAVSPLALVDMAFIAWRNIRLINRIAALYGIELGYFSRIRLFRLVLLNIAFAGASELVREVGMDWLSQDLAARLSARAAQGIGAGLLTARLGIKAMELCRPLPWLGDDKPKLGDFRRQLIGQLKNTLPKKDKPAQQ</sequence>
<comment type="subcellular location">
    <subcellularLocation>
        <location evidence="1">Cell inner membrane</location>
        <topology evidence="1">Multi-pass membrane protein</topology>
    </subcellularLocation>
</comment>
<comment type="similarity">
    <text evidence="1">Belongs to the UPF0283 family.</text>
</comment>